<dbReference type="EC" id="2.4.1.-" evidence="8"/>
<dbReference type="EMBL" id="AF227906">
    <property type="protein sequence ID" value="AAF66233.2"/>
    <property type="molecule type" value="mRNA"/>
</dbReference>
<dbReference type="EMBL" id="AL136104">
    <property type="status" value="NOT_ANNOTATED_CDS"/>
    <property type="molecule type" value="Genomic_DNA"/>
</dbReference>
<dbReference type="EMBL" id="AL158192">
    <property type="status" value="NOT_ANNOTATED_CDS"/>
    <property type="molecule type" value="Genomic_DNA"/>
</dbReference>
<dbReference type="EMBL" id="AL607038">
    <property type="status" value="NOT_ANNOTATED_CDS"/>
    <property type="molecule type" value="Genomic_DNA"/>
</dbReference>
<dbReference type="EMBL" id="AL162500">
    <property type="status" value="NOT_ANNOTATED_CDS"/>
    <property type="molecule type" value="Genomic_DNA"/>
</dbReference>
<dbReference type="EMBL" id="BC032302">
    <property type="protein sequence ID" value="AAH32302.1"/>
    <property type="molecule type" value="mRNA"/>
</dbReference>
<dbReference type="EMBL" id="BC125233">
    <property type="protein sequence ID" value="AAI25234.1"/>
    <property type="molecule type" value="mRNA"/>
</dbReference>
<dbReference type="EMBL" id="AL133051">
    <property type="protein sequence ID" value="CAB61378.1"/>
    <property type="molecule type" value="mRNA"/>
</dbReference>
<dbReference type="CCDS" id="CCDS9480.1">
    <molecule id="Q9NYU1-1"/>
</dbReference>
<dbReference type="PIR" id="T42654">
    <property type="entry name" value="T42654"/>
</dbReference>
<dbReference type="RefSeq" id="NP_064506.3">
    <molecule id="Q9NYU1-1"/>
    <property type="nucleotide sequence ID" value="NM_020121.3"/>
</dbReference>
<dbReference type="SMR" id="Q9NYU1"/>
<dbReference type="BioGRID" id="120875">
    <property type="interactions" value="153"/>
</dbReference>
<dbReference type="FunCoup" id="Q9NYU1">
    <property type="interactions" value="1659"/>
</dbReference>
<dbReference type="IntAct" id="Q9NYU1">
    <property type="interactions" value="53"/>
</dbReference>
<dbReference type="MINT" id="Q9NYU1"/>
<dbReference type="STRING" id="9606.ENSP00000365938"/>
<dbReference type="CAZy" id="GT24">
    <property type="family name" value="Glycosyltransferase Family 24"/>
</dbReference>
<dbReference type="GlyConnect" id="1872">
    <property type="glycosylation" value="3 N-Linked glycans (1 site)"/>
</dbReference>
<dbReference type="GlyCosmos" id="Q9NYU1">
    <property type="glycosylation" value="4 sites, 3 glycans"/>
</dbReference>
<dbReference type="GlyGen" id="Q9NYU1">
    <property type="glycosylation" value="5 sites, 11 N-linked glycans (3 sites), 1 O-linked glycan (1 site)"/>
</dbReference>
<dbReference type="iPTMnet" id="Q9NYU1"/>
<dbReference type="PhosphoSitePlus" id="Q9NYU1"/>
<dbReference type="BioMuta" id="UGGT2"/>
<dbReference type="DMDM" id="311033544"/>
<dbReference type="jPOST" id="Q9NYU1"/>
<dbReference type="MassIVE" id="Q9NYU1"/>
<dbReference type="PaxDb" id="9606-ENSP00000365938"/>
<dbReference type="PeptideAtlas" id="Q9NYU1"/>
<dbReference type="ProteomicsDB" id="72070"/>
<dbReference type="ProteomicsDB" id="83276">
    <molecule id="Q9NYU1-1"/>
</dbReference>
<dbReference type="Pumba" id="Q9NYU1"/>
<dbReference type="Antibodypedia" id="24874">
    <property type="antibodies" value="131 antibodies from 21 providers"/>
</dbReference>
<dbReference type="DNASU" id="55757"/>
<dbReference type="Ensembl" id="ENST00000376714.7">
    <molecule id="Q9NYU1-2"/>
    <property type="protein sequence ID" value="ENSP00000365904.3"/>
    <property type="gene ID" value="ENSG00000102595.22"/>
</dbReference>
<dbReference type="Ensembl" id="ENST00000376747.8">
    <molecule id="Q9NYU1-1"/>
    <property type="protein sequence ID" value="ENSP00000365938.3"/>
    <property type="gene ID" value="ENSG00000102595.22"/>
</dbReference>
<dbReference type="GeneID" id="55757"/>
<dbReference type="KEGG" id="hsa:55757"/>
<dbReference type="MANE-Select" id="ENST00000376747.8">
    <property type="protein sequence ID" value="ENSP00000365938.3"/>
    <property type="RefSeq nucleotide sequence ID" value="NM_020121.4"/>
    <property type="RefSeq protein sequence ID" value="NP_064506.3"/>
</dbReference>
<dbReference type="UCSC" id="uc001vmt.5">
    <molecule id="Q9NYU1-1"/>
    <property type="organism name" value="human"/>
</dbReference>
<dbReference type="AGR" id="HGNC:15664"/>
<dbReference type="CTD" id="55757"/>
<dbReference type="DisGeNET" id="55757"/>
<dbReference type="GeneCards" id="UGGT2"/>
<dbReference type="HGNC" id="HGNC:15664">
    <property type="gene designation" value="UGGT2"/>
</dbReference>
<dbReference type="HPA" id="ENSG00000102595">
    <property type="expression patterns" value="Low tissue specificity"/>
</dbReference>
<dbReference type="MIM" id="605898">
    <property type="type" value="gene"/>
</dbReference>
<dbReference type="neXtProt" id="NX_Q9NYU1"/>
<dbReference type="OpenTargets" id="ENSG00000102595"/>
<dbReference type="PharmGKB" id="PA38015"/>
<dbReference type="VEuPathDB" id="HostDB:ENSG00000102595"/>
<dbReference type="eggNOG" id="KOG1879">
    <property type="taxonomic scope" value="Eukaryota"/>
</dbReference>
<dbReference type="GeneTree" id="ENSGT00390000004600"/>
<dbReference type="HOGENOM" id="CLU_002668_1_1_1"/>
<dbReference type="InParanoid" id="Q9NYU1"/>
<dbReference type="OMA" id="FQTHQLF"/>
<dbReference type="OrthoDB" id="27683at2759"/>
<dbReference type="PAN-GO" id="Q9NYU1">
    <property type="GO annotations" value="5 GO annotations based on evolutionary models"/>
</dbReference>
<dbReference type="PhylomeDB" id="Q9NYU1"/>
<dbReference type="TreeFam" id="TF300320"/>
<dbReference type="PathwayCommons" id="Q9NYU1"/>
<dbReference type="Reactome" id="R-HSA-901032">
    <property type="pathway name" value="ER Quality Control Compartment (ERQC)"/>
</dbReference>
<dbReference type="SignaLink" id="Q9NYU1"/>
<dbReference type="SIGNOR" id="Q9NYU1"/>
<dbReference type="UniPathway" id="UPA00378"/>
<dbReference type="BioGRID-ORCS" id="55757">
    <property type="hits" value="11 hits in 1164 CRISPR screens"/>
</dbReference>
<dbReference type="ChiTaRS" id="UGGT2">
    <property type="organism name" value="human"/>
</dbReference>
<dbReference type="GenomeRNAi" id="55757"/>
<dbReference type="Pharos" id="Q9NYU1">
    <property type="development level" value="Tbio"/>
</dbReference>
<dbReference type="PRO" id="PR:Q9NYU1"/>
<dbReference type="Proteomes" id="UP000005640">
    <property type="component" value="Chromosome 13"/>
</dbReference>
<dbReference type="RNAct" id="Q9NYU1">
    <property type="molecule type" value="protein"/>
</dbReference>
<dbReference type="Bgee" id="ENSG00000102595">
    <property type="expression patterns" value="Expressed in calcaneal tendon and 185 other cell types or tissues"/>
</dbReference>
<dbReference type="ExpressionAtlas" id="Q9NYU1">
    <property type="expression patterns" value="baseline and differential"/>
</dbReference>
<dbReference type="GO" id="GO:0005783">
    <property type="term" value="C:endoplasmic reticulum"/>
    <property type="evidence" value="ECO:0000318"/>
    <property type="project" value="GO_Central"/>
</dbReference>
<dbReference type="GO" id="GO:0005788">
    <property type="term" value="C:endoplasmic reticulum lumen"/>
    <property type="evidence" value="ECO:0000250"/>
    <property type="project" value="UniProtKB"/>
</dbReference>
<dbReference type="GO" id="GO:0044322">
    <property type="term" value="C:endoplasmic reticulum quality control compartment"/>
    <property type="evidence" value="ECO:0007669"/>
    <property type="project" value="GOC"/>
</dbReference>
<dbReference type="GO" id="GO:0005793">
    <property type="term" value="C:endoplasmic reticulum-Golgi intermediate compartment"/>
    <property type="evidence" value="ECO:0007669"/>
    <property type="project" value="UniProtKB-SubCell"/>
</dbReference>
<dbReference type="GO" id="GO:0032991">
    <property type="term" value="C:protein-containing complex"/>
    <property type="evidence" value="ECO:0000314"/>
    <property type="project" value="UniProtKB"/>
</dbReference>
<dbReference type="GO" id="GO:0003980">
    <property type="term" value="F:UDP-glucose:glycoprotein glucosyltransferase activity"/>
    <property type="evidence" value="ECO:0000250"/>
    <property type="project" value="UniProtKB"/>
</dbReference>
<dbReference type="GO" id="GO:0051082">
    <property type="term" value="F:unfolded protein binding"/>
    <property type="evidence" value="ECO:0000318"/>
    <property type="project" value="GO_Central"/>
</dbReference>
<dbReference type="GO" id="GO:1904380">
    <property type="term" value="P:endoplasmic reticulum mannose trimming"/>
    <property type="evidence" value="ECO:0000304"/>
    <property type="project" value="Reactome"/>
</dbReference>
<dbReference type="GO" id="GO:0018279">
    <property type="term" value="P:protein N-linked glycosylation via asparagine"/>
    <property type="evidence" value="ECO:0000318"/>
    <property type="project" value="GO_Central"/>
</dbReference>
<dbReference type="CDD" id="cd06432">
    <property type="entry name" value="GT8_HUGT1_C_like"/>
    <property type="match status" value="1"/>
</dbReference>
<dbReference type="FunFam" id="3.90.550.10:FF:000004">
    <property type="entry name" value="UDP-glucose glycoprotein glucosyltransferase 1"/>
    <property type="match status" value="1"/>
</dbReference>
<dbReference type="Gene3D" id="3.90.550.10">
    <property type="entry name" value="Spore Coat Polysaccharide Biosynthesis Protein SpsA, Chain A"/>
    <property type="match status" value="1"/>
</dbReference>
<dbReference type="InterPro" id="IPR040497">
    <property type="entry name" value="Glyco_transf_24"/>
</dbReference>
<dbReference type="InterPro" id="IPR029044">
    <property type="entry name" value="Nucleotide-diphossugar_trans"/>
</dbReference>
<dbReference type="InterPro" id="IPR009448">
    <property type="entry name" value="UDP-g_GGtrans"/>
</dbReference>
<dbReference type="InterPro" id="IPR040693">
    <property type="entry name" value="UGGT_TRXL_1"/>
</dbReference>
<dbReference type="InterPro" id="IPR040694">
    <property type="entry name" value="UGGT_TRXL_2"/>
</dbReference>
<dbReference type="InterPro" id="IPR040692">
    <property type="entry name" value="UGGT_TRXL_3"/>
</dbReference>
<dbReference type="InterPro" id="IPR040525">
    <property type="entry name" value="UGGT_TRXL_4"/>
</dbReference>
<dbReference type="PANTHER" id="PTHR11226">
    <property type="entry name" value="UDP-GLUCOSE GLYCOPROTEIN:GLUCOSYLTRANSFERASE"/>
    <property type="match status" value="1"/>
</dbReference>
<dbReference type="PANTHER" id="PTHR11226:SF1">
    <property type="entry name" value="UDP-GLUCOSE:GLYCOPROTEIN GLUCOSYLTRANSFERASE 2"/>
    <property type="match status" value="1"/>
</dbReference>
<dbReference type="Pfam" id="PF18404">
    <property type="entry name" value="Glyco_transf_24"/>
    <property type="match status" value="1"/>
</dbReference>
<dbReference type="Pfam" id="PF18400">
    <property type="entry name" value="Thioredoxin_12"/>
    <property type="match status" value="1"/>
</dbReference>
<dbReference type="Pfam" id="PF18401">
    <property type="entry name" value="Thioredoxin_13"/>
    <property type="match status" value="1"/>
</dbReference>
<dbReference type="Pfam" id="PF18402">
    <property type="entry name" value="Thioredoxin_14"/>
    <property type="match status" value="1"/>
</dbReference>
<dbReference type="Pfam" id="PF18403">
    <property type="entry name" value="Thioredoxin_15"/>
    <property type="match status" value="1"/>
</dbReference>
<dbReference type="Pfam" id="PF06427">
    <property type="entry name" value="UDP-g_GGTase"/>
    <property type="match status" value="1"/>
</dbReference>
<dbReference type="SUPFAM" id="SSF53448">
    <property type="entry name" value="Nucleotide-diphospho-sugar transferases"/>
    <property type="match status" value="1"/>
</dbReference>
<dbReference type="PROSITE" id="PS00014">
    <property type="entry name" value="ER_TARGET"/>
    <property type="match status" value="1"/>
</dbReference>
<organism>
    <name type="scientific">Homo sapiens</name>
    <name type="common">Human</name>
    <dbReference type="NCBI Taxonomy" id="9606"/>
    <lineage>
        <taxon>Eukaryota</taxon>
        <taxon>Metazoa</taxon>
        <taxon>Chordata</taxon>
        <taxon>Craniata</taxon>
        <taxon>Vertebrata</taxon>
        <taxon>Euteleostomi</taxon>
        <taxon>Mammalia</taxon>
        <taxon>Eutheria</taxon>
        <taxon>Euarchontoglires</taxon>
        <taxon>Primates</taxon>
        <taxon>Haplorrhini</taxon>
        <taxon>Catarrhini</taxon>
        <taxon>Hominidae</taxon>
        <taxon>Homo</taxon>
    </lineage>
</organism>
<proteinExistence type="evidence at protein level"/>
<gene>
    <name type="primary">UGGT2</name>
    <name type="synonym">UGCGL2</name>
    <name type="synonym">UGT2</name>
</gene>
<name>UGGG2_HUMAN</name>
<feature type="signal peptide" evidence="2">
    <location>
        <begin position="1"/>
        <end position="27"/>
    </location>
</feature>
<feature type="chain" id="PRO_0000012274" description="UDP-glucose:glycoprotein glucosyltransferase 2">
    <location>
        <begin position="28"/>
        <end position="1516"/>
    </location>
</feature>
<feature type="region of interest" description="Glucosyltransferase">
    <location>
        <begin position="1220"/>
        <end position="1516"/>
    </location>
</feature>
<feature type="short sequence motif" description="Prevents secretion from ER" evidence="3">
    <location>
        <begin position="1513"/>
        <end position="1516"/>
    </location>
</feature>
<feature type="modified residue" description="Phosphotyrosine" evidence="13">
    <location>
        <position position="1289"/>
    </location>
</feature>
<feature type="glycosylation site" description="N-linked (GlcNAc...) asparagine" evidence="2">
    <location>
        <position position="256"/>
    </location>
</feature>
<feature type="glycosylation site" description="N-linked (GlcNAc...) asparagine" evidence="2">
    <location>
        <position position="286"/>
    </location>
</feature>
<feature type="glycosylation site" description="N-linked (GlcNAc...) asparagine" evidence="2">
    <location>
        <position position="920"/>
    </location>
</feature>
<feature type="glycosylation site" description="N-linked (GlcNAc...) asparagine" evidence="2">
    <location>
        <position position="950"/>
    </location>
</feature>
<feature type="splice variant" id="VSP_056319" description="In isoform 2." evidence="10">
    <original>E</original>
    <variation>S</variation>
    <location>
        <position position="278"/>
    </location>
</feature>
<feature type="splice variant" id="VSP_056320" description="In isoform 2." evidence="10">
    <location>
        <begin position="279"/>
        <end position="1516"/>
    </location>
</feature>
<feature type="sequence variant" id="VAR_030006" description="In dbSNP:rs12863903." evidence="4">
    <original>A</original>
    <variation>T</variation>
    <location>
        <position position="323"/>
    </location>
</feature>
<feature type="sequence variant" id="VAR_030007" description="In dbSNP:rs816142." evidence="4 6 9">
    <original>S</original>
    <variation>A</variation>
    <location>
        <position position="328"/>
    </location>
</feature>
<feature type="sequence variant" id="VAR_055849" description="In dbSNP:rs33949518." evidence="4">
    <original>A</original>
    <variation>T</variation>
    <location>
        <position position="821"/>
    </location>
</feature>
<feature type="sequence variant" id="VAR_061196" description="In dbSNP:rs35060832.">
    <original>K</original>
    <variation>R</variation>
    <location>
        <position position="865"/>
    </location>
</feature>
<feature type="sequence variant" id="VAR_055850" description="In dbSNP:rs35780499.">
    <original>F</original>
    <variation>I</variation>
    <location>
        <position position="924"/>
    </location>
</feature>
<feature type="sequence variant" id="VAR_030008" description="In dbSNP:rs12876018." evidence="4 6">
    <original>M</original>
    <variation>L</variation>
    <location>
        <position position="994"/>
    </location>
</feature>
<feature type="sequence variant" id="VAR_055851" description="In dbSNP:rs9525072.">
    <original>F</original>
    <variation>L</variation>
    <location>
        <position position="1274"/>
    </location>
</feature>
<feature type="sequence variant" id="VAR_061197" description="In dbSNP:rs35123499.">
    <original>Y</original>
    <variation>F</variation>
    <location>
        <position position="1285"/>
    </location>
</feature>
<feature type="mutagenesis site" description="Loss of catalytic activity." evidence="8">
    <original>D</original>
    <variation>A</variation>
    <location>
        <position position="1333"/>
    </location>
</feature>
<sequence length="1516" mass="174735">MAPAKATNVVRLLLGSTALWLSQLGSGTVAASKSVTAHLAAKWPETPLLLEASEFMAEESNEKFWQFLETVQELAIYKQTESDYSYYNLILKKAGQFLDNLHINLLKFAFSIRAYSPAIQMFQQIAADEPPPDGCNAFVVIHKKHTCKINEIKKLLKKAASRTRPYLFKGDHKFPTNKENLPVVILYAEMGTRTFSAFHKVLSEKAQNEEILYVLRHYIQKPSSRKMYLSGYGVELAIKSTEYKALDDTQVKTVTNTTVEDETETNEVQGFLFGKLKEIYSDLRDNLTAFQKYLIESNKQMMPLKVWELQDLSFQAASQIMSAPVYDSIKLMKDISQNFPIKARSLTRIAVNQHMREEIKENQKDLQVRFKIQPGDARLFINGLRVDMDVYDAFSILDMLKLEGKMMNGLRNLGINGEDMSKFLKLNSHIWEYTYVLDIRHSSIMWINDLENDDLYITWPTSCQKLLKPVFPGSVPSIRRNFHNLVLFIDPAQEYTLDFIKLADVFYSHEVPLRIGFVFILNTDDEVDGANDAGVALWRAFNYIAEEFDISEAFISIVHMYQKVKKDQNILTVDNVKSVLQNTFPHANIWDILGIHSKYDEERKAGASFYKMTGLGPLPQALYNGEPFKHEEMNIKELKMAVLQRMMDASVYLQREVFLGTLNDRTNAIDFLMDRNNVVPRINTLILRTNQQYLNLISTSVTADVEDFSTFFFLDSQDKSAVIAKNMYYLTQDDESIISAVTLWIIADFDKPSGRKLLFNALKHMKTSVHSRLGIIYNPTSKINEENTAISRGILAAFLTQKNMFLRSFLGQLAKEEIATAIYSGDKIKTFLIEGMDKNAFEKKYNTVGVNIFRTHQLFCQDVLKLRPGEMGIVSNGRFLGPLDEDFYAEDFYLLEKITFSNLGEKIKGIVENMGINANNMSDFIMKVDALMSSVPKRASRYDVTFLRENHSVIKTNPQENDMFFNVIAIVDPLTREAQKMAQLLVVLGKIINMKIKLFMNCRGRLSEAPLESFYRFVLEPELMSGANDVSSLGPVAKFLDIPESPLLILNMITPEGWLVETVHSNCDLDNIHLKDTEKTVTAEYELEYLLLEGQCFDKVTEQPPRGLQFTLGTKNKPAVVDTIVMAHHGYFQLKANPGAWILRLHQGKSEDIYQIVGHEGTDSQADLEDIIVVLNSFKSKILKVKVKKETDKIKEDILTDEDEKTKGLWDSIKSFTVSLHKENKKEKDVLNIFSVASGHLYERFLRIMMLSVLRNTKTPVKFWLLKNYLSPTFKEVIPHMAKEYGFRYELVQYRWPRWLRQQTERQRIIWGYKILFLDVLFPLAVDKIIFVDADQIVRHDLKELRDFDLDGAPYGYTPFCDSRREMDGYRFWKTGYWASHLLRRKYHISALYVVDLKKFRRIGAGDRLRSQYQALSQDPNSLSNLDQDLPNNMIYQVAIKSLPQDWLWCETWCDDESKQRAKTIDLCNNPKTKESKLKAAARIVPEWVEYDAEIRQLLDHLENKKQDTILTHDEL</sequence>
<evidence type="ECO:0000250" key="1">
    <source>
        <dbReference type="UniProtKB" id="Q09140"/>
    </source>
</evidence>
<evidence type="ECO:0000255" key="2"/>
<evidence type="ECO:0000255" key="3">
    <source>
        <dbReference type="PROSITE-ProRule" id="PRU10138"/>
    </source>
</evidence>
<evidence type="ECO:0000269" key="4">
    <source>
    </source>
</evidence>
<evidence type="ECO:0000269" key="5">
    <source>
    </source>
</evidence>
<evidence type="ECO:0000269" key="6">
    <source>
    </source>
</evidence>
<evidence type="ECO:0000269" key="7">
    <source>
    </source>
</evidence>
<evidence type="ECO:0000269" key="8">
    <source>
    </source>
</evidence>
<evidence type="ECO:0000269" key="9">
    <source>
    </source>
</evidence>
<evidence type="ECO:0000303" key="10">
    <source>
    </source>
</evidence>
<evidence type="ECO:0000305" key="11"/>
<evidence type="ECO:0000305" key="12">
    <source>
    </source>
</evidence>
<evidence type="ECO:0007744" key="13">
    <source>
    </source>
</evidence>
<comment type="function">
    <text evidence="8">Recognizes glycoproteins with minor folding defects. Reglucosylates single N-glycans near the misfolded part of the protein, thus providing quality control for protein folding in the endoplasmic reticulum. Reglucosylated proteins are recognized by calreticulin for recycling to the endoplasmic reticulum and refolding or degradation.</text>
</comment>
<comment type="catalytic activity">
    <reaction evidence="8">
        <text>N(4)-(alpha-D-Man-(1-&gt;2)-alpha-D-Man-(1-&gt;2)-alpha-D-Man-(1-&gt;3)-[alpha-D-Man-(1-&gt;2)-alpha-D-Man-(1-&gt;3)-[alpha-D-Man-(1-&gt;2)-alpha-D-Man-(1-&gt;6)]-alpha-D-Man-(1-&gt;6)]-beta-D-Man-(1-&gt;4)-beta-D-GlcNAc-(1-&gt;4)-beta-D-GlcNAc)-L-asparaginyl-[protein] (N-glucan mannose isomer 9A1,2,3B1,2,3) + UDP-alpha-D-glucose = N(4)-(alpha-D-Glc-(1-&gt;3)-alpha-D-Man-(1-&gt;2)-alpha-D-Man-(1-&gt;2)-alpha-D-Man-(1-&gt;3)-[alpha-D-Man-(1-&gt;2)-alpha-D-Man-(1-&gt;3)-[alpha-D-Man-(1-&gt;2)-alpha-D-Man-(1-&gt;6)]-alpha-D-Man-(1-&gt;6)]-beta-D-Man-(1-&gt;4)-beta-D-GlcNAc-(1-&gt;4)-beta-D-GlcNAc)-L-asparaginyl-[protein] + UDP + H(+)</text>
        <dbReference type="Rhea" id="RHEA:61304"/>
        <dbReference type="Rhea" id="RHEA-COMP:14356"/>
        <dbReference type="Rhea" id="RHEA-COMP:14357"/>
        <dbReference type="ChEBI" id="CHEBI:15378"/>
        <dbReference type="ChEBI" id="CHEBI:58223"/>
        <dbReference type="ChEBI" id="CHEBI:58885"/>
        <dbReference type="ChEBI" id="CHEBI:59080"/>
        <dbReference type="ChEBI" id="CHEBI:139493"/>
    </reaction>
</comment>
<comment type="cofactor">
    <cofactor evidence="1">
        <name>Ca(2+)</name>
        <dbReference type="ChEBI" id="CHEBI:29108"/>
    </cofactor>
    <cofactor evidence="1">
        <name>Mn(2+)</name>
        <dbReference type="ChEBI" id="CHEBI:29035"/>
    </cofactor>
</comment>
<comment type="activity regulation">
    <text evidence="8">Ethylenediaminetetraacetic acid completely abolishes catalytic activity (PubMed:24415556). Catalytic activity is enhanced by complex formation with SELENOF (PubMed:24415556).</text>
</comment>
<comment type="pathway">
    <text evidence="8">Protein modification; protein glycosylation.</text>
</comment>
<comment type="subunit">
    <text evidence="7 8">Interacts with METTL23 (PubMed:23349634). Interacts with SELENOF (PubMed:24415556).</text>
</comment>
<comment type="interaction">
    <interactant intactId="EBI-1054215">
        <id>Q9NYU1</id>
    </interactant>
    <interactant intactId="EBI-743771">
        <id>Q92624</id>
        <label>APPBP2</label>
    </interactant>
    <organismsDiffer>false</organismsDiffer>
    <experiments>3</experiments>
</comment>
<comment type="interaction">
    <interactant intactId="EBI-1054215">
        <id>Q9NYU1</id>
    </interactant>
    <interactant intactId="EBI-354921">
        <id>P11021</id>
        <label>HSPA5</label>
    </interactant>
    <organismsDiffer>false</organismsDiffer>
    <experiments>2</experiments>
</comment>
<comment type="interaction">
    <interactant intactId="EBI-1054215">
        <id>Q9NYU1</id>
    </interactant>
    <interactant intactId="EBI-25475897">
        <id>P0DTC6</id>
        <label>6</label>
    </interactant>
    <organismsDiffer>true</organismsDiffer>
    <experiments>3</experiments>
</comment>
<comment type="subcellular location">
    <subcellularLocation>
        <location evidence="3 5">Endoplasmic reticulum lumen</location>
    </subcellularLocation>
    <subcellularLocation>
        <location evidence="3 5">Endoplasmic reticulum-Golgi intermediate compartment</location>
    </subcellularLocation>
</comment>
<comment type="alternative products">
    <event type="alternative splicing"/>
    <isoform>
        <id>Q9NYU1-1</id>
        <name>1</name>
        <sequence type="displayed"/>
    </isoform>
    <isoform>
        <id>Q9NYU1-2</id>
        <name>2</name>
        <sequence type="described" ref="VSP_056319 VSP_056320"/>
    </isoform>
</comment>
<comment type="tissue specificity">
    <text evidence="4">Higher levels in kidney, pancreas, heart, and skeletal muscle.</text>
</comment>
<comment type="similarity">
    <text evidence="11">Belongs to the glycosyltransferase 8 family.</text>
</comment>
<comment type="caution">
    <text evidence="12">Has no enzymatic activity towards unfolded RNase B or thyroglobulin.</text>
</comment>
<protein>
    <recommendedName>
        <fullName>UDP-glucose:glycoprotein glucosyltransferase 2</fullName>
        <shortName>UGT2</shortName>
        <shortName>hUGT2</shortName>
        <ecNumber evidence="8">2.4.1.-</ecNumber>
    </recommendedName>
    <alternativeName>
        <fullName>UDP--Glc:glycoprotein glucosyltransferase 2</fullName>
    </alternativeName>
    <alternativeName>
        <fullName>UDP-glucose ceramide glucosyltransferase-like 1</fullName>
    </alternativeName>
</protein>
<reference key="1">
    <citation type="journal article" date="2000" name="Biochemistry">
        <title>Two homologues encoding human UDP-glucose:glycoprotein glucosyltransferase differ in mRNA expression and enzymatic activity.</title>
        <authorList>
            <person name="Arnold S.M."/>
            <person name="Fessler L.I."/>
            <person name="Fessler J.H."/>
            <person name="Kaufman R.J."/>
        </authorList>
    </citation>
    <scope>NUCLEOTIDE SEQUENCE [MRNA] (ISOFORM 1)</scope>
    <scope>TISSUE SPECIFICITY</scope>
    <scope>VARIANTS THR-323; ALA-328; THR-821 AND LEU-994</scope>
    <source>
        <tissue>Fetal liver</tissue>
    </source>
</reference>
<reference key="2">
    <citation type="journal article" date="2004" name="Nature">
        <title>The DNA sequence and analysis of human chromosome 13.</title>
        <authorList>
            <person name="Dunham A."/>
            <person name="Matthews L.H."/>
            <person name="Burton J."/>
            <person name="Ashurst J.L."/>
            <person name="Howe K.L."/>
            <person name="Ashcroft K.J."/>
            <person name="Beare D.M."/>
            <person name="Burford D.C."/>
            <person name="Hunt S.E."/>
            <person name="Griffiths-Jones S."/>
            <person name="Jones M.C."/>
            <person name="Keenan S.J."/>
            <person name="Oliver K."/>
            <person name="Scott C.E."/>
            <person name="Ainscough R."/>
            <person name="Almeida J.P."/>
            <person name="Ambrose K.D."/>
            <person name="Andrews D.T."/>
            <person name="Ashwell R.I.S."/>
            <person name="Babbage A.K."/>
            <person name="Bagguley C.L."/>
            <person name="Bailey J."/>
            <person name="Bannerjee R."/>
            <person name="Barlow K.F."/>
            <person name="Bates K."/>
            <person name="Beasley H."/>
            <person name="Bird C.P."/>
            <person name="Bray-Allen S."/>
            <person name="Brown A.J."/>
            <person name="Brown J.Y."/>
            <person name="Burrill W."/>
            <person name="Carder C."/>
            <person name="Carter N.P."/>
            <person name="Chapman J.C."/>
            <person name="Clamp M.E."/>
            <person name="Clark S.Y."/>
            <person name="Clarke G."/>
            <person name="Clee C.M."/>
            <person name="Clegg S.C."/>
            <person name="Cobley V."/>
            <person name="Collins J.E."/>
            <person name="Corby N."/>
            <person name="Coville G.J."/>
            <person name="Deloukas P."/>
            <person name="Dhami P."/>
            <person name="Dunham I."/>
            <person name="Dunn M."/>
            <person name="Earthrowl M.E."/>
            <person name="Ellington A.G."/>
            <person name="Faulkner L."/>
            <person name="Frankish A.G."/>
            <person name="Frankland J."/>
            <person name="French L."/>
            <person name="Garner P."/>
            <person name="Garnett J."/>
            <person name="Gilbert J.G.R."/>
            <person name="Gilson C.J."/>
            <person name="Ghori J."/>
            <person name="Grafham D.V."/>
            <person name="Gribble S.M."/>
            <person name="Griffiths C."/>
            <person name="Hall R.E."/>
            <person name="Hammond S."/>
            <person name="Harley J.L."/>
            <person name="Hart E.A."/>
            <person name="Heath P.D."/>
            <person name="Howden P.J."/>
            <person name="Huckle E.J."/>
            <person name="Hunt P.J."/>
            <person name="Hunt A.R."/>
            <person name="Johnson C."/>
            <person name="Johnson D."/>
            <person name="Kay M."/>
            <person name="Kimberley A.M."/>
            <person name="King A."/>
            <person name="Laird G.K."/>
            <person name="Langford C.J."/>
            <person name="Lawlor S."/>
            <person name="Leongamornlert D.A."/>
            <person name="Lloyd D.M."/>
            <person name="Lloyd C."/>
            <person name="Loveland J.E."/>
            <person name="Lovell J."/>
            <person name="Martin S."/>
            <person name="Mashreghi-Mohammadi M."/>
            <person name="McLaren S.J."/>
            <person name="McMurray A."/>
            <person name="Milne S."/>
            <person name="Moore M.J.F."/>
            <person name="Nickerson T."/>
            <person name="Palmer S.A."/>
            <person name="Pearce A.V."/>
            <person name="Peck A.I."/>
            <person name="Pelan S."/>
            <person name="Phillimore B."/>
            <person name="Porter K.M."/>
            <person name="Rice C.M."/>
            <person name="Searle S."/>
            <person name="Sehra H.K."/>
            <person name="Shownkeen R."/>
            <person name="Skuce C.D."/>
            <person name="Smith M."/>
            <person name="Steward C.A."/>
            <person name="Sycamore N."/>
            <person name="Tester J."/>
            <person name="Thomas D.W."/>
            <person name="Tracey A."/>
            <person name="Tromans A."/>
            <person name="Tubby B."/>
            <person name="Wall M."/>
            <person name="Wallis J.M."/>
            <person name="West A.P."/>
            <person name="Whitehead S.L."/>
            <person name="Willey D.L."/>
            <person name="Wilming L."/>
            <person name="Wray P.W."/>
            <person name="Wright M.W."/>
            <person name="Young L."/>
            <person name="Coulson A."/>
            <person name="Durbin R.M."/>
            <person name="Hubbard T."/>
            <person name="Sulston J.E."/>
            <person name="Beck S."/>
            <person name="Bentley D.R."/>
            <person name="Rogers J."/>
            <person name="Ross M.T."/>
        </authorList>
    </citation>
    <scope>NUCLEOTIDE SEQUENCE [LARGE SCALE GENOMIC DNA]</scope>
</reference>
<reference key="3">
    <citation type="journal article" date="2004" name="Genome Res.">
        <title>The status, quality, and expansion of the NIH full-length cDNA project: the Mammalian Gene Collection (MGC).</title>
        <authorList>
            <consortium name="The MGC Project Team"/>
        </authorList>
    </citation>
    <scope>NUCLEOTIDE SEQUENCE [LARGE SCALE MRNA] (ISOFORMS 1 AND 2)</scope>
    <scope>VARIANTS ALA-328 AND LEU-994</scope>
    <source>
        <tissue>Brain</tissue>
    </source>
</reference>
<reference key="4">
    <citation type="journal article" date="2007" name="BMC Genomics">
        <title>The full-ORF clone resource of the German cDNA consortium.</title>
        <authorList>
            <person name="Bechtel S."/>
            <person name="Rosenfelder H."/>
            <person name="Duda A."/>
            <person name="Schmidt C.P."/>
            <person name="Ernst U."/>
            <person name="Wellenreuther R."/>
            <person name="Mehrle A."/>
            <person name="Schuster C."/>
            <person name="Bahr A."/>
            <person name="Bloecker H."/>
            <person name="Heubner D."/>
            <person name="Hoerlein A."/>
            <person name="Michel G."/>
            <person name="Wedler H."/>
            <person name="Koehrer K."/>
            <person name="Ottenwaelder B."/>
            <person name="Poustka A."/>
            <person name="Wiemann S."/>
            <person name="Schupp I."/>
        </authorList>
    </citation>
    <scope>NUCLEOTIDE SEQUENCE [LARGE SCALE MRNA] OF 151-1516 (ISOFORM 1)</scope>
    <source>
        <tissue>Testis</tissue>
    </source>
</reference>
<reference key="5">
    <citation type="journal article" date="2003" name="J. Biol. Chem.">
        <title>The noncatalytic portion of human UDP-glucose: glycoprotein glucosyltransferase I confers UDP-glucose binding and transferase function to the catalytic domain.</title>
        <authorList>
            <person name="Arnold S.M."/>
            <person name="Kaufman R.J."/>
        </authorList>
    </citation>
    <scope>SUBCELLULAR LOCATION</scope>
</reference>
<reference key="6">
    <citation type="journal article" date="2009" name="Sci. Signal.">
        <title>Quantitative phosphoproteomic analysis of T cell receptor signaling reveals system-wide modulation of protein-protein interactions.</title>
        <authorList>
            <person name="Mayya V."/>
            <person name="Lundgren D.H."/>
            <person name="Hwang S.-I."/>
            <person name="Rezaul K."/>
            <person name="Wu L."/>
            <person name="Eng J.K."/>
            <person name="Rodionov V."/>
            <person name="Han D.K."/>
        </authorList>
    </citation>
    <scope>PHOSPHORYLATION [LARGE SCALE ANALYSIS] AT TYR-1289</scope>
    <scope>IDENTIFICATION BY MASS SPECTROMETRY [LARGE SCALE ANALYSIS]</scope>
    <source>
        <tissue>Leukemic T-cell</tissue>
    </source>
</reference>
<reference key="7">
    <citation type="journal article" date="2011" name="BMC Syst. Biol.">
        <title>Initial characterization of the human central proteome.</title>
        <authorList>
            <person name="Burkard T.R."/>
            <person name="Planyavsky M."/>
            <person name="Kaupe I."/>
            <person name="Breitwieser F.P."/>
            <person name="Buerckstuemmer T."/>
            <person name="Bennett K.L."/>
            <person name="Superti-Furga G."/>
            <person name="Colinge J."/>
        </authorList>
    </citation>
    <scope>IDENTIFICATION BY MASS SPECTROMETRY [LARGE SCALE ANALYSIS]</scope>
</reference>
<reference key="8">
    <citation type="journal article" date="2013" name="PLoS Genet.">
        <title>A newly uncovered group of distantly related lysine methyltransferases preferentially interact with molecular chaperones to regulate their activity.</title>
        <authorList>
            <person name="Cloutier P."/>
            <person name="Lavallee-Adam M."/>
            <person name="Faubert D."/>
            <person name="Blanchette M."/>
            <person name="Coulombe B."/>
        </authorList>
    </citation>
    <scope>INTERACTION WITH METTL23</scope>
</reference>
<reference key="9">
    <citation type="journal article" date="2014" name="Glycobiology">
        <title>Both isoforms of human UDP-glucose:glycoprotein glucosyltransferase are enzymatically active.</title>
        <authorList>
            <person name="Takeda Y."/>
            <person name="Seko A."/>
            <person name="Hachisu M."/>
            <person name="Daikoku S."/>
            <person name="Izumi M."/>
            <person name="Koizumi A."/>
            <person name="Fujikawa K."/>
            <person name="Kajihara Y."/>
            <person name="Ito Y."/>
        </authorList>
    </citation>
    <scope>FUNCTION</scope>
    <scope>CATALYTIC ACTIVITY</scope>
    <scope>ACTIVITY REGULATION</scope>
    <scope>PATHWAY</scope>
    <scope>INTERACTION WITH SELENOF</scope>
    <scope>MUTAGENESIS OF ASP-1333</scope>
</reference>
<reference key="10">
    <citation type="journal article" date="2017" name="PLoS Genet.">
        <title>Altered paracellular cation permeability due to a rare CLDN10B variant causes anhidrosis and kidney damage.</title>
        <authorList>
            <person name="Klar J."/>
            <person name="Piontek J."/>
            <person name="Milatz S."/>
            <person name="Tariq M."/>
            <person name="Jameel M."/>
            <person name="Breiderhoff T."/>
            <person name="Schuster J."/>
            <person name="Fatima A."/>
            <person name="Asif M."/>
            <person name="Sher M."/>
            <person name="Maebert K."/>
            <person name="Fromm A."/>
            <person name="Baig S.M."/>
            <person name="Guenzel D."/>
            <person name="Dahl N."/>
        </authorList>
    </citation>
    <scope>VARIANT ALA-328</scope>
</reference>
<accession>Q9NYU1</accession>
<accession>A6NKL4</accession>
<accession>Q08AD0</accession>
<accession>Q5JQR8</accession>
<accession>Q8N5K0</accession>
<accession>Q9UFC4</accession>
<keyword id="KW-0025">Alternative splicing</keyword>
<keyword id="KW-0256">Endoplasmic reticulum</keyword>
<keyword id="KW-0325">Glycoprotein</keyword>
<keyword id="KW-0328">Glycosyltransferase</keyword>
<keyword id="KW-0597">Phosphoprotein</keyword>
<keyword id="KW-1267">Proteomics identification</keyword>
<keyword id="KW-1185">Reference proteome</keyword>
<keyword id="KW-0732">Signal</keyword>
<keyword id="KW-0808">Transferase</keyword>